<protein>
    <recommendedName>
        <fullName evidence="1">Fluoride-specific ion channel FluC</fullName>
    </recommendedName>
</protein>
<reference key="1">
    <citation type="journal article" date="2003" name="Genome Res.">
        <title>Comparative genome analysis of Vibrio vulnificus, a marine pathogen.</title>
        <authorList>
            <person name="Chen C.-Y."/>
            <person name="Wu K.-M."/>
            <person name="Chang Y.-C."/>
            <person name="Chang C.-H."/>
            <person name="Tsai H.-C."/>
            <person name="Liao T.-L."/>
            <person name="Liu Y.-M."/>
            <person name="Chen H.-J."/>
            <person name="Shen A.B.-T."/>
            <person name="Li J.-C."/>
            <person name="Su T.-L."/>
            <person name="Shao C.-P."/>
            <person name="Lee C.-T."/>
            <person name="Hor L.-I."/>
            <person name="Tsai S.-F."/>
        </authorList>
    </citation>
    <scope>NUCLEOTIDE SEQUENCE [LARGE SCALE GENOMIC DNA]</scope>
    <source>
        <strain>YJ016</strain>
    </source>
</reference>
<accession>Q7MGM2</accession>
<name>FLUC_VIBVY</name>
<feature type="chain" id="PRO_0000110209" description="Fluoride-specific ion channel FluC">
    <location>
        <begin position="1"/>
        <end position="126"/>
    </location>
</feature>
<feature type="transmembrane region" description="Helical" evidence="1">
    <location>
        <begin position="4"/>
        <end position="24"/>
    </location>
</feature>
<feature type="transmembrane region" description="Helical" evidence="1">
    <location>
        <begin position="38"/>
        <end position="58"/>
    </location>
</feature>
<feature type="transmembrane region" description="Helical" evidence="1">
    <location>
        <begin position="71"/>
        <end position="91"/>
    </location>
</feature>
<feature type="transmembrane region" description="Helical" evidence="1">
    <location>
        <begin position="104"/>
        <end position="124"/>
    </location>
</feature>
<feature type="binding site" evidence="1">
    <location>
        <position position="78"/>
    </location>
    <ligand>
        <name>Na(+)</name>
        <dbReference type="ChEBI" id="CHEBI:29101"/>
        <note>structural</note>
    </ligand>
</feature>
<feature type="binding site" evidence="1">
    <location>
        <position position="81"/>
    </location>
    <ligand>
        <name>Na(+)</name>
        <dbReference type="ChEBI" id="CHEBI:29101"/>
        <note>structural</note>
    </ligand>
</feature>
<comment type="function">
    <text evidence="1">Fluoride-specific ion channel. Important for reducing fluoride concentration in the cell, thus reducing its toxicity.</text>
</comment>
<comment type="catalytic activity">
    <reaction evidence="1">
        <text>fluoride(in) = fluoride(out)</text>
        <dbReference type="Rhea" id="RHEA:76159"/>
        <dbReference type="ChEBI" id="CHEBI:17051"/>
    </reaction>
    <physiologicalReaction direction="left-to-right" evidence="1">
        <dbReference type="Rhea" id="RHEA:76160"/>
    </physiologicalReaction>
</comment>
<comment type="activity regulation">
    <text evidence="1">Na(+) is not transported, but it plays an essential structural role and its presence is essential for fluoride channel function.</text>
</comment>
<comment type="subcellular location">
    <subcellularLocation>
        <location evidence="1">Cell inner membrane</location>
        <topology evidence="1">Multi-pass membrane protein</topology>
    </subcellularLocation>
</comment>
<comment type="similarity">
    <text evidence="1">Belongs to the fluoride channel Fluc/FEX (TC 1.A.43) family.</text>
</comment>
<sequence>MSQFAILGFIALGGAFGACSRYLVSELCVVLLGRGFPYGTLTVNVVGSFIMGLLIAAFESELLATEPWRQIIGLGFLGALTTFSTFSMDNVLLMQQGAFFKMGLNVVLNVTLSITAAWVGFQLLKS</sequence>
<organism>
    <name type="scientific">Vibrio vulnificus (strain YJ016)</name>
    <dbReference type="NCBI Taxonomy" id="196600"/>
    <lineage>
        <taxon>Bacteria</taxon>
        <taxon>Pseudomonadati</taxon>
        <taxon>Pseudomonadota</taxon>
        <taxon>Gammaproteobacteria</taxon>
        <taxon>Vibrionales</taxon>
        <taxon>Vibrionaceae</taxon>
        <taxon>Vibrio</taxon>
    </lineage>
</organism>
<proteinExistence type="inferred from homology"/>
<dbReference type="EMBL" id="BA000037">
    <property type="protein sequence ID" value="BAC95972.1"/>
    <property type="molecule type" value="Genomic_DNA"/>
</dbReference>
<dbReference type="RefSeq" id="WP_011079011.1">
    <property type="nucleotide sequence ID" value="NC_005139.1"/>
</dbReference>
<dbReference type="SMR" id="Q7MGM2"/>
<dbReference type="STRING" id="672.VV93_v1c29270"/>
<dbReference type="KEGG" id="vvy:VV3208"/>
<dbReference type="PATRIC" id="fig|196600.6.peg.3175"/>
<dbReference type="eggNOG" id="COG0239">
    <property type="taxonomic scope" value="Bacteria"/>
</dbReference>
<dbReference type="HOGENOM" id="CLU_114342_3_0_6"/>
<dbReference type="Proteomes" id="UP000002675">
    <property type="component" value="Chromosome I"/>
</dbReference>
<dbReference type="GO" id="GO:0005886">
    <property type="term" value="C:plasma membrane"/>
    <property type="evidence" value="ECO:0007669"/>
    <property type="project" value="UniProtKB-SubCell"/>
</dbReference>
<dbReference type="GO" id="GO:0062054">
    <property type="term" value="F:fluoride channel activity"/>
    <property type="evidence" value="ECO:0007669"/>
    <property type="project" value="UniProtKB-UniRule"/>
</dbReference>
<dbReference type="GO" id="GO:0046872">
    <property type="term" value="F:metal ion binding"/>
    <property type="evidence" value="ECO:0007669"/>
    <property type="project" value="UniProtKB-KW"/>
</dbReference>
<dbReference type="GO" id="GO:0140114">
    <property type="term" value="P:cellular detoxification of fluoride"/>
    <property type="evidence" value="ECO:0007669"/>
    <property type="project" value="UniProtKB-UniRule"/>
</dbReference>
<dbReference type="HAMAP" id="MF_00454">
    <property type="entry name" value="FluC"/>
    <property type="match status" value="1"/>
</dbReference>
<dbReference type="InterPro" id="IPR003691">
    <property type="entry name" value="FluC"/>
</dbReference>
<dbReference type="NCBIfam" id="TIGR00494">
    <property type="entry name" value="crcB"/>
    <property type="match status" value="1"/>
</dbReference>
<dbReference type="NCBIfam" id="NF010796">
    <property type="entry name" value="PRK14200.1"/>
    <property type="match status" value="1"/>
</dbReference>
<dbReference type="PANTHER" id="PTHR28259">
    <property type="entry name" value="FLUORIDE EXPORT PROTEIN 1-RELATED"/>
    <property type="match status" value="1"/>
</dbReference>
<dbReference type="PANTHER" id="PTHR28259:SF1">
    <property type="entry name" value="FLUORIDE EXPORT PROTEIN 1-RELATED"/>
    <property type="match status" value="1"/>
</dbReference>
<dbReference type="Pfam" id="PF02537">
    <property type="entry name" value="CRCB"/>
    <property type="match status" value="1"/>
</dbReference>
<evidence type="ECO:0000255" key="1">
    <source>
        <dbReference type="HAMAP-Rule" id="MF_00454"/>
    </source>
</evidence>
<keyword id="KW-0997">Cell inner membrane</keyword>
<keyword id="KW-1003">Cell membrane</keyword>
<keyword id="KW-0407">Ion channel</keyword>
<keyword id="KW-0406">Ion transport</keyword>
<keyword id="KW-0472">Membrane</keyword>
<keyword id="KW-0479">Metal-binding</keyword>
<keyword id="KW-0915">Sodium</keyword>
<keyword id="KW-0812">Transmembrane</keyword>
<keyword id="KW-1133">Transmembrane helix</keyword>
<keyword id="KW-0813">Transport</keyword>
<gene>
    <name evidence="1" type="primary">fluC</name>
    <name evidence="1" type="synonym">crcB</name>
    <name type="ordered locus">VV3208</name>
</gene>